<geneLocation type="mitochondrion"/>
<name>COX1_FELCA</name>
<gene>
    <name type="primary">MT-CO1</name>
    <name type="synonym">COI</name>
    <name type="synonym">COXI</name>
    <name type="synonym">MTCO1</name>
</gene>
<sequence length="514" mass="57056">MFMNRWLFSTNHKDIGTLYLLFGAWAGMVGTALSLLIRAELGQPGTLLGDDQIYNVIVTAHAFVMIFFMVMPIMIGGFGNWLVPLMIGAPDMAFPRMNNMSFWLLPPSFLLLLASSMVEAGAGTGWTVYPPLAGNLAHAGASVDLTIFSLHLAGVSSILGAINFITTIINMKPPAMSQYQTPLFVWSVLITAVLLLLSLPVLAAGITMLLTDRNLNTTFFDPAGGGDPILYQHLFWFFGHPEVYILILPGFGMISHIVTYYSGKKEPFGYMGMVWAMMSIGFLGFIVWAHHMFTVGMDVDTRAYFTSATMIIAIPTGVKVFSWLATLHGGNIKWSPAMLWALGFIFLFTVGGLTGIVLANSSLDIVLHDTYYVVAHFHYVLSMGAVFAIMGGFVHWFPLFSGYTLDNTWAKIHFTIMFVGVNMTFFPQHFLGLSGMPRRYSDYPDAYTTWNTISSMGSFISLTAVMLMVFMVWEAFASKREVAMVELTTTNLEWLHGCPPPYHTFEEPTYVLLK</sequence>
<accession>P48888</accession>
<reference key="1">
    <citation type="journal article" date="1996" name="Genomics">
        <title>Complete nucleotide sequences of the domestic cat (Felis catus) mitochondrial genome and a transposed mtDNA tandem repeat (Numt) in the nuclear genome.</title>
        <authorList>
            <person name="Lopez J.V."/>
            <person name="Cevario S."/>
            <person name="O'Brien S.J."/>
        </authorList>
    </citation>
    <scope>NUCLEOTIDE SEQUENCE [LARGE SCALE GENOMIC DNA]</scope>
    <source>
        <strain evidence="5">Abyssinian</strain>
        <tissue>Blood</tissue>
    </source>
</reference>
<reference key="2">
    <citation type="journal article" date="1994" name="J. Mol. Evol.">
        <title>Numt, a recent transfer and tandem amplification of mitochondrial DNA to the nuclear genome of the domestic cat.</title>
        <authorList>
            <person name="Lopez J.V."/>
            <person name="Yuhki N."/>
            <person name="Masuda R."/>
            <person name="Modi W."/>
            <person name="O'Brien S.J."/>
        </authorList>
    </citation>
    <scope>NUCLEOTIDE SEQUENCE [GENOMIC DNA] OF 106-184</scope>
</reference>
<evidence type="ECO:0000250" key="1">
    <source>
        <dbReference type="UniProtKB" id="P00395"/>
    </source>
</evidence>
<evidence type="ECO:0000250" key="2">
    <source>
        <dbReference type="UniProtKB" id="P00396"/>
    </source>
</evidence>
<evidence type="ECO:0000250" key="3">
    <source>
        <dbReference type="UniProtKB" id="P00401"/>
    </source>
</evidence>
<evidence type="ECO:0000305" key="4"/>
<evidence type="ECO:0000312" key="5">
    <source>
        <dbReference type="Proteomes" id="UP000011712"/>
    </source>
</evidence>
<comment type="function">
    <text evidence="3">Component of the cytochrome c oxidase, the last enzyme in the mitochondrial electron transport chain which drives oxidative phosphorylation. The respiratory chain contains 3 multisubunit complexes succinate dehydrogenase (complex II, CII), ubiquinol-cytochrome c oxidoreductase (cytochrome b-c1 complex, complex III, CIII) and cytochrome c oxidase (complex IV, CIV), that cooperate to transfer electrons derived from NADH and succinate to molecular oxygen, creating an electrochemical gradient over the inner membrane that drives transmembrane transport and the ATP synthase. Cytochrome c oxidase is the component of the respiratory chain that catalyzes the reduction of oxygen to water. Electrons originating from reduced cytochrome c in the intermembrane space (IMS) are transferred via the dinuclear copper A center (CU(A)) of subunit 2 and heme A of subunit 1 to the active site in subunit 1, a binuclear center (BNC) formed by heme A3 and copper B (CU(B)). The BNC reduces molecular oxygen to 2 water molecules using 4 electrons from cytochrome c in the IMS and 4 protons from the mitochondrial matrix.</text>
</comment>
<comment type="catalytic activity">
    <reaction evidence="3">
        <text>4 Fe(II)-[cytochrome c] + O2 + 8 H(+)(in) = 4 Fe(III)-[cytochrome c] + 2 H2O + 4 H(+)(out)</text>
        <dbReference type="Rhea" id="RHEA:11436"/>
        <dbReference type="Rhea" id="RHEA-COMP:10350"/>
        <dbReference type="Rhea" id="RHEA-COMP:14399"/>
        <dbReference type="ChEBI" id="CHEBI:15377"/>
        <dbReference type="ChEBI" id="CHEBI:15378"/>
        <dbReference type="ChEBI" id="CHEBI:15379"/>
        <dbReference type="ChEBI" id="CHEBI:29033"/>
        <dbReference type="ChEBI" id="CHEBI:29034"/>
        <dbReference type="EC" id="7.1.1.9"/>
    </reaction>
    <physiologicalReaction direction="left-to-right" evidence="3">
        <dbReference type="Rhea" id="RHEA:11437"/>
    </physiologicalReaction>
</comment>
<comment type="cofactor">
    <cofactor evidence="2">
        <name>heme</name>
        <dbReference type="ChEBI" id="CHEBI:30413"/>
    </cofactor>
    <text evidence="2">Binds 2 heme A groups non-covalently per subunit.</text>
</comment>
<comment type="cofactor">
    <cofactor evidence="2">
        <name>Cu cation</name>
        <dbReference type="ChEBI" id="CHEBI:23378"/>
    </cofactor>
    <text evidence="2">Binds a copper B center.</text>
</comment>
<comment type="pathway">
    <text evidence="3">Energy metabolism; oxidative phosphorylation.</text>
</comment>
<comment type="subunit">
    <text evidence="1 2">Component of the cytochrome c oxidase (complex IV, CIV), a multisubunit enzyme composed of 14 subunits. The complex is composed of a catalytic core of 3 subunits MT-CO1, MT-CO2 and MT-CO3, encoded in the mitochondrial DNA, and 11 supernumerary subunits COX4I, COX5A, COX5B, COX6A, COX6B, COX6C, COX7A, COX7B, COX7C, COX8 and NDUFA4, which are encoded in the nuclear genome. The complex exists as a monomer or a dimer and forms supercomplexes (SCs) in the inner mitochondrial membrane with NADH-ubiquinone oxidoreductase (complex I, CI) and ubiquinol-cytochrome c oxidoreductase (cytochrome b-c1 complex, complex III, CIII), resulting in different assemblies (supercomplex SCI(1)III(2)IV(1) and megacomplex MCI(2)III(2)IV(2)) (By similarity). As a newly synthesized protein, rapidly incorporates into a multi-subunit assembly intermediate in the inner membrane, called MITRAC (mitochondrial translation regulation assembly intermediate of cytochrome c oxidase) complex, whose core components are COA3/MITRAC12 and COX14. Within the MITRAC complex, interacts with COA3 and with SMIM20/MITRAC7; the interaction with SMIM20 stabilizes the newly synthesized MT-CO1 and prevents its premature turnover. Interacts with TMEM177 in a COX20-dependent manner (By similarity).</text>
</comment>
<comment type="subcellular location">
    <subcellularLocation>
        <location evidence="2">Mitochondrion inner membrane</location>
        <topology evidence="2">Multi-pass membrane protein</topology>
    </subcellularLocation>
</comment>
<comment type="similarity">
    <text evidence="4">Belongs to the heme-copper respiratory oxidase family.</text>
</comment>
<organism>
    <name type="scientific">Felis catus</name>
    <name type="common">Cat</name>
    <name type="synonym">Felis silvestris catus</name>
    <dbReference type="NCBI Taxonomy" id="9685"/>
    <lineage>
        <taxon>Eukaryota</taxon>
        <taxon>Metazoa</taxon>
        <taxon>Chordata</taxon>
        <taxon>Craniata</taxon>
        <taxon>Vertebrata</taxon>
        <taxon>Euteleostomi</taxon>
        <taxon>Mammalia</taxon>
        <taxon>Eutheria</taxon>
        <taxon>Laurasiatheria</taxon>
        <taxon>Carnivora</taxon>
        <taxon>Feliformia</taxon>
        <taxon>Felidae</taxon>
        <taxon>Felinae</taxon>
        <taxon>Felis</taxon>
    </lineage>
</organism>
<proteinExistence type="inferred from homology"/>
<keyword id="KW-0106">Calcium</keyword>
<keyword id="KW-0186">Copper</keyword>
<keyword id="KW-0249">Electron transport</keyword>
<keyword id="KW-0349">Heme</keyword>
<keyword id="KW-0408">Iron</keyword>
<keyword id="KW-0460">Magnesium</keyword>
<keyword id="KW-0472">Membrane</keyword>
<keyword id="KW-0479">Metal-binding</keyword>
<keyword id="KW-0496">Mitochondrion</keyword>
<keyword id="KW-0999">Mitochondrion inner membrane</keyword>
<keyword id="KW-1185">Reference proteome</keyword>
<keyword id="KW-0679">Respiratory chain</keyword>
<keyword id="KW-0915">Sodium</keyword>
<keyword id="KW-1278">Translocase</keyword>
<keyword id="KW-0812">Transmembrane</keyword>
<keyword id="KW-1133">Transmembrane helix</keyword>
<keyword id="KW-0813">Transport</keyword>
<feature type="chain" id="PRO_0000183334" description="Cytochrome c oxidase subunit 1">
    <location>
        <begin position="1"/>
        <end position="514"/>
    </location>
</feature>
<feature type="topological domain" description="Mitochondrial matrix" evidence="2">
    <location>
        <begin position="1"/>
        <end position="11"/>
    </location>
</feature>
<feature type="transmembrane region" description="Helical; Name=I" evidence="2">
    <location>
        <begin position="12"/>
        <end position="40"/>
    </location>
</feature>
<feature type="topological domain" description="Mitochondrial intermembrane" evidence="2">
    <location>
        <begin position="41"/>
        <end position="50"/>
    </location>
</feature>
<feature type="transmembrane region" description="Helical; Name=II" evidence="2">
    <location>
        <begin position="51"/>
        <end position="86"/>
    </location>
</feature>
<feature type="topological domain" description="Mitochondrial matrix" evidence="2">
    <location>
        <begin position="87"/>
        <end position="94"/>
    </location>
</feature>
<feature type="transmembrane region" description="Helical; Name=III" evidence="2">
    <location>
        <begin position="95"/>
        <end position="117"/>
    </location>
</feature>
<feature type="topological domain" description="Mitochondrial intermembrane" evidence="2">
    <location>
        <begin position="118"/>
        <end position="140"/>
    </location>
</feature>
<feature type="transmembrane region" description="Helical; Name=IV" evidence="2">
    <location>
        <begin position="141"/>
        <end position="170"/>
    </location>
</feature>
<feature type="topological domain" description="Mitochondrial matrix" evidence="2">
    <location>
        <begin position="171"/>
        <end position="182"/>
    </location>
</feature>
<feature type="transmembrane region" description="Helical; Name=V" evidence="2">
    <location>
        <begin position="183"/>
        <end position="212"/>
    </location>
</feature>
<feature type="topological domain" description="Mitochondrial intermembrane" evidence="2">
    <location>
        <begin position="213"/>
        <end position="227"/>
    </location>
</feature>
<feature type="transmembrane region" description="Helical; Name=VI" evidence="2">
    <location>
        <begin position="228"/>
        <end position="261"/>
    </location>
</feature>
<feature type="topological domain" description="Mitochondrial matrix" evidence="2">
    <location>
        <begin position="262"/>
        <end position="269"/>
    </location>
</feature>
<feature type="transmembrane region" description="Helical; Name=VII" evidence="2">
    <location>
        <begin position="270"/>
        <end position="286"/>
    </location>
</feature>
<feature type="topological domain" description="Mitochondrial intermembrane" evidence="2">
    <location>
        <begin position="287"/>
        <end position="298"/>
    </location>
</feature>
<feature type="transmembrane region" description="Helical; Name=VIII" evidence="2">
    <location>
        <begin position="299"/>
        <end position="327"/>
    </location>
</feature>
<feature type="topological domain" description="Mitochondrial matrix" evidence="2">
    <location>
        <begin position="328"/>
        <end position="335"/>
    </location>
</feature>
<feature type="transmembrane region" description="Helical; Name=IX" evidence="2">
    <location>
        <begin position="336"/>
        <end position="357"/>
    </location>
</feature>
<feature type="topological domain" description="Mitochondrial intermembrane" evidence="2">
    <location>
        <begin position="358"/>
        <end position="370"/>
    </location>
</feature>
<feature type="transmembrane region" description="Helical; Name=X" evidence="2">
    <location>
        <begin position="371"/>
        <end position="400"/>
    </location>
</feature>
<feature type="topological domain" description="Mitochondrial matrix" evidence="2">
    <location>
        <begin position="401"/>
        <end position="406"/>
    </location>
</feature>
<feature type="transmembrane region" description="Helical; Name=XI" evidence="2">
    <location>
        <begin position="407"/>
        <end position="433"/>
    </location>
</feature>
<feature type="topological domain" description="Mitochondrial intermembrane" evidence="2">
    <location>
        <begin position="434"/>
        <end position="446"/>
    </location>
</feature>
<feature type="transmembrane region" description="Helical; Name=XII" evidence="2">
    <location>
        <begin position="447"/>
        <end position="478"/>
    </location>
</feature>
<feature type="topological domain" description="Mitochondrial matrix" evidence="2">
    <location>
        <begin position="479"/>
        <end position="514"/>
    </location>
</feature>
<feature type="binding site" evidence="2">
    <location>
        <position position="40"/>
    </location>
    <ligand>
        <name>Na(+)</name>
        <dbReference type="ChEBI" id="CHEBI:29101"/>
    </ligand>
</feature>
<feature type="binding site" evidence="2">
    <location>
        <position position="45"/>
    </location>
    <ligand>
        <name>Na(+)</name>
        <dbReference type="ChEBI" id="CHEBI:29101"/>
    </ligand>
</feature>
<feature type="binding site" description="axial binding residue" evidence="2">
    <location>
        <position position="61"/>
    </location>
    <ligand>
        <name>Fe(II)-heme a</name>
        <dbReference type="ChEBI" id="CHEBI:61715"/>
        <note>low-spin</note>
    </ligand>
    <ligandPart>
        <name>Fe</name>
        <dbReference type="ChEBI" id="CHEBI:18248"/>
    </ligandPart>
</feature>
<feature type="binding site" evidence="2">
    <location>
        <position position="240"/>
    </location>
    <ligand>
        <name>Cu cation</name>
        <dbReference type="ChEBI" id="CHEBI:23378"/>
        <label>B</label>
    </ligand>
</feature>
<feature type="binding site" evidence="2">
    <location>
        <position position="244"/>
    </location>
    <ligand>
        <name>O2</name>
        <dbReference type="ChEBI" id="CHEBI:15379"/>
    </ligand>
</feature>
<feature type="binding site" evidence="2">
    <location>
        <position position="290"/>
    </location>
    <ligand>
        <name>Cu cation</name>
        <dbReference type="ChEBI" id="CHEBI:23378"/>
        <label>B</label>
    </ligand>
</feature>
<feature type="binding site" evidence="2">
    <location>
        <position position="291"/>
    </location>
    <ligand>
        <name>Cu cation</name>
        <dbReference type="ChEBI" id="CHEBI:23378"/>
        <label>B</label>
    </ligand>
</feature>
<feature type="binding site" evidence="2">
    <location>
        <position position="368"/>
    </location>
    <ligand>
        <name>Mg(2+)</name>
        <dbReference type="ChEBI" id="CHEBI:18420"/>
        <note>ligand shared with MT-CO2</note>
    </ligand>
</feature>
<feature type="binding site" evidence="2">
    <location>
        <position position="369"/>
    </location>
    <ligand>
        <name>Mg(2+)</name>
        <dbReference type="ChEBI" id="CHEBI:18420"/>
        <note>ligand shared with MT-CO2</note>
    </ligand>
</feature>
<feature type="binding site" description="axial binding residue" evidence="2">
    <location>
        <position position="376"/>
    </location>
    <ligand>
        <name>heme a3</name>
        <dbReference type="ChEBI" id="CHEBI:83282"/>
        <note>high-spin</note>
    </ligand>
    <ligandPart>
        <name>Fe</name>
        <dbReference type="ChEBI" id="CHEBI:18248"/>
    </ligandPart>
</feature>
<feature type="binding site" description="axial binding residue" evidence="2">
    <location>
        <position position="378"/>
    </location>
    <ligand>
        <name>Fe(II)-heme a</name>
        <dbReference type="ChEBI" id="CHEBI:61715"/>
        <note>low-spin</note>
    </ligand>
    <ligandPart>
        <name>Fe</name>
        <dbReference type="ChEBI" id="CHEBI:18248"/>
    </ligandPart>
</feature>
<feature type="binding site" evidence="2">
    <location>
        <position position="441"/>
    </location>
    <ligand>
        <name>Na(+)</name>
        <dbReference type="ChEBI" id="CHEBI:29101"/>
    </ligand>
</feature>
<feature type="cross-link" description="1'-histidyl-3'-tyrosine (His-Tyr)" evidence="2">
    <location>
        <begin position="240"/>
        <end position="244"/>
    </location>
</feature>
<protein>
    <recommendedName>
        <fullName>Cytochrome c oxidase subunit 1</fullName>
        <ecNumber>7.1.1.9</ecNumber>
    </recommendedName>
    <alternativeName>
        <fullName>Cytochrome c oxidase polypeptide I</fullName>
    </alternativeName>
</protein>
<dbReference type="EC" id="7.1.1.9"/>
<dbReference type="EMBL" id="U20753">
    <property type="protein sequence ID" value="AAC48571.1"/>
    <property type="molecule type" value="Genomic_DNA"/>
</dbReference>
<dbReference type="EMBL" id="S75099">
    <property type="protein sequence ID" value="AAB32047.1"/>
    <property type="molecule type" value="Genomic_DNA"/>
</dbReference>
<dbReference type="PIR" id="T11404">
    <property type="entry name" value="T11404"/>
</dbReference>
<dbReference type="RefSeq" id="NP_008253.1">
    <property type="nucleotide sequence ID" value="NC_001700.1"/>
</dbReference>
<dbReference type="SMR" id="P48888"/>
<dbReference type="FunCoup" id="P48888">
    <property type="interactions" value="9"/>
</dbReference>
<dbReference type="STRING" id="9685.ENSFCAP00000025711"/>
<dbReference type="PaxDb" id="9685-ENSFCAP00000025711"/>
<dbReference type="Ensembl" id="ENSFCAT00000032643.1">
    <property type="protein sequence ID" value="ENSFCAP00000025711.1"/>
    <property type="gene ID" value="ENSFCAG00000032058.1"/>
</dbReference>
<dbReference type="GeneID" id="807934"/>
<dbReference type="KEGG" id="fca:807934"/>
<dbReference type="CTD" id="4512"/>
<dbReference type="VGNC" id="VGNC:80930">
    <property type="gene designation" value="MT-CO1"/>
</dbReference>
<dbReference type="eggNOG" id="KOG4769">
    <property type="taxonomic scope" value="Eukaryota"/>
</dbReference>
<dbReference type="GeneTree" id="ENSGT00390000001518"/>
<dbReference type="HOGENOM" id="CLU_011899_7_3_1"/>
<dbReference type="InParanoid" id="P48888"/>
<dbReference type="OMA" id="WAMMSIG"/>
<dbReference type="OrthoDB" id="10002679at2759"/>
<dbReference type="UniPathway" id="UPA00705"/>
<dbReference type="Proteomes" id="UP000011712">
    <property type="component" value="Mitochondrion"/>
</dbReference>
<dbReference type="Bgee" id="ENSFCAG00000032058">
    <property type="expression patterns" value="Expressed in adult mammalian kidney and 10 other cell types or tissues"/>
</dbReference>
<dbReference type="GO" id="GO:0005743">
    <property type="term" value="C:mitochondrial inner membrane"/>
    <property type="evidence" value="ECO:0007669"/>
    <property type="project" value="UniProtKB-SubCell"/>
</dbReference>
<dbReference type="GO" id="GO:0045277">
    <property type="term" value="C:respiratory chain complex IV"/>
    <property type="evidence" value="ECO:0000250"/>
    <property type="project" value="UniProtKB"/>
</dbReference>
<dbReference type="GO" id="GO:0004129">
    <property type="term" value="F:cytochrome-c oxidase activity"/>
    <property type="evidence" value="ECO:0007669"/>
    <property type="project" value="UniProtKB-EC"/>
</dbReference>
<dbReference type="GO" id="GO:0020037">
    <property type="term" value="F:heme binding"/>
    <property type="evidence" value="ECO:0007669"/>
    <property type="project" value="InterPro"/>
</dbReference>
<dbReference type="GO" id="GO:0046872">
    <property type="term" value="F:metal ion binding"/>
    <property type="evidence" value="ECO:0007669"/>
    <property type="project" value="UniProtKB-KW"/>
</dbReference>
<dbReference type="GO" id="GO:0009060">
    <property type="term" value="P:aerobic respiration"/>
    <property type="evidence" value="ECO:0000318"/>
    <property type="project" value="GO_Central"/>
</dbReference>
<dbReference type="GO" id="GO:0006119">
    <property type="term" value="P:oxidative phosphorylation"/>
    <property type="evidence" value="ECO:0007669"/>
    <property type="project" value="UniProtKB-UniPathway"/>
</dbReference>
<dbReference type="GO" id="GO:0022904">
    <property type="term" value="P:respiratory electron transport chain"/>
    <property type="evidence" value="ECO:0000318"/>
    <property type="project" value="GO_Central"/>
</dbReference>
<dbReference type="CDD" id="cd01663">
    <property type="entry name" value="Cyt_c_Oxidase_I"/>
    <property type="match status" value="1"/>
</dbReference>
<dbReference type="FunFam" id="1.20.210.10:FF:000001">
    <property type="entry name" value="Cytochrome c oxidase subunit 1"/>
    <property type="match status" value="1"/>
</dbReference>
<dbReference type="Gene3D" id="1.20.210.10">
    <property type="entry name" value="Cytochrome c oxidase-like, subunit I domain"/>
    <property type="match status" value="1"/>
</dbReference>
<dbReference type="InterPro" id="IPR023616">
    <property type="entry name" value="Cyt_c_oxase-like_su1_dom"/>
</dbReference>
<dbReference type="InterPro" id="IPR036927">
    <property type="entry name" value="Cyt_c_oxase-like_su1_sf"/>
</dbReference>
<dbReference type="InterPro" id="IPR000883">
    <property type="entry name" value="Cyt_C_Oxase_1"/>
</dbReference>
<dbReference type="InterPro" id="IPR023615">
    <property type="entry name" value="Cyt_c_Oxase_su1_BS"/>
</dbReference>
<dbReference type="InterPro" id="IPR033944">
    <property type="entry name" value="Cyt_c_oxase_su1_dom"/>
</dbReference>
<dbReference type="PANTHER" id="PTHR10422">
    <property type="entry name" value="CYTOCHROME C OXIDASE SUBUNIT 1"/>
    <property type="match status" value="1"/>
</dbReference>
<dbReference type="PANTHER" id="PTHR10422:SF18">
    <property type="entry name" value="CYTOCHROME C OXIDASE SUBUNIT 1"/>
    <property type="match status" value="1"/>
</dbReference>
<dbReference type="Pfam" id="PF00115">
    <property type="entry name" value="COX1"/>
    <property type="match status" value="1"/>
</dbReference>
<dbReference type="PRINTS" id="PR01165">
    <property type="entry name" value="CYCOXIDASEI"/>
</dbReference>
<dbReference type="SUPFAM" id="SSF81442">
    <property type="entry name" value="Cytochrome c oxidase subunit I-like"/>
    <property type="match status" value="1"/>
</dbReference>
<dbReference type="PROSITE" id="PS50855">
    <property type="entry name" value="COX1"/>
    <property type="match status" value="1"/>
</dbReference>
<dbReference type="PROSITE" id="PS00077">
    <property type="entry name" value="COX1_CUB"/>
    <property type="match status" value="1"/>
</dbReference>